<gene>
    <name type="primary">torA</name>
    <name type="ordered locus">VP1162</name>
</gene>
<feature type="signal peptide" description="Tat-type signal" evidence="2">
    <location>
        <begin position="1"/>
        <end position="33"/>
    </location>
</feature>
<feature type="chain" id="PRO_0000019160" description="Trimethylamine-N-oxide reductase">
    <location>
        <begin position="34"/>
        <end position="820"/>
    </location>
</feature>
<feature type="binding site" evidence="1">
    <location>
        <position position="179"/>
    </location>
    <ligand>
        <name>Mo-bis(molybdopterin guanine dinucleotide)</name>
        <dbReference type="ChEBI" id="CHEBI:60539"/>
    </ligand>
    <ligandPart>
        <name>Mo</name>
        <dbReference type="ChEBI" id="CHEBI:28685"/>
    </ligandPart>
</feature>
<dbReference type="EC" id="1.7.2.3"/>
<dbReference type="EMBL" id="BA000031">
    <property type="protein sequence ID" value="BAC59425.1"/>
    <property type="molecule type" value="Genomic_DNA"/>
</dbReference>
<dbReference type="RefSeq" id="NP_797541.1">
    <property type="nucleotide sequence ID" value="NC_004603.1"/>
</dbReference>
<dbReference type="RefSeq" id="WP_005462326.1">
    <property type="nucleotide sequence ID" value="NC_004603.1"/>
</dbReference>
<dbReference type="SMR" id="Q87QI7"/>
<dbReference type="GeneID" id="1188667"/>
<dbReference type="KEGG" id="vpa:VP1162"/>
<dbReference type="PATRIC" id="fig|223926.6.peg.1103"/>
<dbReference type="eggNOG" id="COG0243">
    <property type="taxonomic scope" value="Bacteria"/>
</dbReference>
<dbReference type="HOGENOM" id="CLU_000422_13_3_6"/>
<dbReference type="Proteomes" id="UP000002493">
    <property type="component" value="Chromosome 1"/>
</dbReference>
<dbReference type="GO" id="GO:0030288">
    <property type="term" value="C:outer membrane-bounded periplasmic space"/>
    <property type="evidence" value="ECO:0007669"/>
    <property type="project" value="TreeGrafter"/>
</dbReference>
<dbReference type="GO" id="GO:0009055">
    <property type="term" value="F:electron transfer activity"/>
    <property type="evidence" value="ECO:0007669"/>
    <property type="project" value="TreeGrafter"/>
</dbReference>
<dbReference type="GO" id="GO:0030151">
    <property type="term" value="F:molybdenum ion binding"/>
    <property type="evidence" value="ECO:0007669"/>
    <property type="project" value="InterPro"/>
</dbReference>
<dbReference type="GO" id="GO:0043546">
    <property type="term" value="F:molybdopterin cofactor binding"/>
    <property type="evidence" value="ECO:0007669"/>
    <property type="project" value="InterPro"/>
</dbReference>
<dbReference type="GO" id="GO:0050626">
    <property type="term" value="F:trimethylamine-N-oxide reductase (cytochrome c) activity"/>
    <property type="evidence" value="ECO:0007669"/>
    <property type="project" value="UniProtKB-EC"/>
</dbReference>
<dbReference type="GO" id="GO:0009061">
    <property type="term" value="P:anaerobic respiration"/>
    <property type="evidence" value="ECO:0007669"/>
    <property type="project" value="TreeGrafter"/>
</dbReference>
<dbReference type="CDD" id="cd02793">
    <property type="entry name" value="MopB_CT_DMSOR-BSOR-TMAOR"/>
    <property type="match status" value="1"/>
</dbReference>
<dbReference type="FunFam" id="2.40.40.20:FF:000009">
    <property type="entry name" value="Biotin sulfoxide reductase 2"/>
    <property type="match status" value="1"/>
</dbReference>
<dbReference type="Gene3D" id="2.40.40.20">
    <property type="match status" value="1"/>
</dbReference>
<dbReference type="Gene3D" id="3.40.50.740">
    <property type="match status" value="1"/>
</dbReference>
<dbReference type="Gene3D" id="3.40.228.10">
    <property type="entry name" value="Dimethylsulfoxide Reductase, domain 2"/>
    <property type="match status" value="1"/>
</dbReference>
<dbReference type="Gene3D" id="3.90.55.10">
    <property type="entry name" value="Dimethylsulfoxide Reductase, domain 3"/>
    <property type="match status" value="1"/>
</dbReference>
<dbReference type="InterPro" id="IPR009010">
    <property type="entry name" value="Asp_de-COase-like_dom_sf"/>
</dbReference>
<dbReference type="InterPro" id="IPR041954">
    <property type="entry name" value="CT_DMSOR/BSOR/TMAOR"/>
</dbReference>
<dbReference type="InterPro" id="IPR041460">
    <property type="entry name" value="Molybdopterin_N"/>
</dbReference>
<dbReference type="InterPro" id="IPR006657">
    <property type="entry name" value="MoPterin_dinucl-bd_dom"/>
</dbReference>
<dbReference type="InterPro" id="IPR006656">
    <property type="entry name" value="Mopterin_OxRdtase"/>
</dbReference>
<dbReference type="InterPro" id="IPR006655">
    <property type="entry name" value="Mopterin_OxRdtase_prok_CS"/>
</dbReference>
<dbReference type="InterPro" id="IPR050612">
    <property type="entry name" value="Prok_Mopterin_Oxidored"/>
</dbReference>
<dbReference type="InterPro" id="IPR006311">
    <property type="entry name" value="TAT_signal"/>
</dbReference>
<dbReference type="InterPro" id="IPR019546">
    <property type="entry name" value="TAT_signal_bac_arc"/>
</dbReference>
<dbReference type="InterPro" id="IPR011887">
    <property type="entry name" value="TorA"/>
</dbReference>
<dbReference type="NCBIfam" id="NF011682">
    <property type="entry name" value="PRK15102.1"/>
    <property type="match status" value="1"/>
</dbReference>
<dbReference type="NCBIfam" id="TIGR01409">
    <property type="entry name" value="TAT_signal_seq"/>
    <property type="match status" value="1"/>
</dbReference>
<dbReference type="NCBIfam" id="TIGR02164">
    <property type="entry name" value="torA"/>
    <property type="match status" value="1"/>
</dbReference>
<dbReference type="PANTHER" id="PTHR43742">
    <property type="entry name" value="TRIMETHYLAMINE-N-OXIDE REDUCTASE"/>
    <property type="match status" value="1"/>
</dbReference>
<dbReference type="PANTHER" id="PTHR43742:SF4">
    <property type="entry name" value="TRIMETHYLAMINE-N-OXIDE REDUCTASE 1"/>
    <property type="match status" value="1"/>
</dbReference>
<dbReference type="Pfam" id="PF00384">
    <property type="entry name" value="Molybdopterin"/>
    <property type="match status" value="1"/>
</dbReference>
<dbReference type="Pfam" id="PF18364">
    <property type="entry name" value="Molybdopterin_N"/>
    <property type="match status" value="1"/>
</dbReference>
<dbReference type="Pfam" id="PF01568">
    <property type="entry name" value="Molydop_binding"/>
    <property type="match status" value="1"/>
</dbReference>
<dbReference type="SUPFAM" id="SSF50692">
    <property type="entry name" value="ADC-like"/>
    <property type="match status" value="1"/>
</dbReference>
<dbReference type="SUPFAM" id="SSF53706">
    <property type="entry name" value="Formate dehydrogenase/DMSO reductase, domains 1-3"/>
    <property type="match status" value="1"/>
</dbReference>
<dbReference type="PROSITE" id="PS00490">
    <property type="entry name" value="MOLYBDOPTERIN_PROK_2"/>
    <property type="match status" value="1"/>
</dbReference>
<dbReference type="PROSITE" id="PS00932">
    <property type="entry name" value="MOLYBDOPTERIN_PROK_3"/>
    <property type="match status" value="1"/>
</dbReference>
<dbReference type="PROSITE" id="PS51318">
    <property type="entry name" value="TAT"/>
    <property type="match status" value="1"/>
</dbReference>
<accession>Q87QI7</accession>
<keyword id="KW-0479">Metal-binding</keyword>
<keyword id="KW-0500">Molybdenum</keyword>
<keyword id="KW-0560">Oxidoreductase</keyword>
<keyword id="KW-0574">Periplasm</keyword>
<keyword id="KW-0732">Signal</keyword>
<sequence length="820" mass="92542">MAITRRSFLKGVATTSAASVIGPSLLASASANAAESTGTWKVTGSHWGAFRAHIYAGKVQEIKPLELDKNPTEMLNGIKGIIYSPSRVRYPMVRLDWLKKHKYSADTRGNNRFIRVTWDEALDLFYRELERVQKEYGPWALHAGQTGWNQTGSFNNCTAHMQRAVGMHGNFITKVGDYSTGAGQTIMPYVLGSTEVYAQGTSWSEILENSDNIILWANDPVKNLQVGWNCETHESFKYLAELKEKVAKGEINVLSVDPVKNKTQRYLENDHLYINPMTDVAFMLAVAHVLYNENLYDKKFIDTYCLGFEEFIQYVQGKTKDKVEKTPEWAAAICGVKADKIREFARMLVSGRTQILMGWCIQRQEHGEQPYWAAAVVAAMVGQIGLPGGGISYGHHYSSIGVPSTGFAGPGGFPRNLDQGMKPKWDNNDFNGYSRTIPVARWIDCLLEPGKEINYNGGKVKLPDFKMMVISGCNPWHHHQDRNRMKKAFRKLQTVVTIEFAWTATCRFSDIVLPACTQWERNDIDVYGSYSNKGLIAMHRLVDPLFQSKPDFQIMSELTQRFGRREEYTRGMSEMEWIESLYNDCKKANEGKFEMPEFNEFWEKSVLDFGEGKPWVRHADFRKDPELNPLGTPSGFIEITSRKIGRYGYEHCQEHPMWFEKSERSHGGPGSDKYPFWLQSCHPDKRLHSQMCESEEFRATYAVQGREPVYINPIDAKAKGIKDGDLVRVFNGRGQLLAGAVLTDSYPRGVIRIEEGAWYGPLNEKEGAICTYGDPNTLTQDIGSSELAQATSANTCIVDFEKFTGKVPPVTSFGGPIEVA</sequence>
<name>TORA_VIBPA</name>
<reference key="1">
    <citation type="journal article" date="2003" name="Lancet">
        <title>Genome sequence of Vibrio parahaemolyticus: a pathogenic mechanism distinct from that of V. cholerae.</title>
        <authorList>
            <person name="Makino K."/>
            <person name="Oshima K."/>
            <person name="Kurokawa K."/>
            <person name="Yokoyama K."/>
            <person name="Uda T."/>
            <person name="Tagomori K."/>
            <person name="Iijima Y."/>
            <person name="Najima M."/>
            <person name="Nakano M."/>
            <person name="Yamashita A."/>
            <person name="Kubota Y."/>
            <person name="Kimura S."/>
            <person name="Yasunaga T."/>
            <person name="Honda T."/>
            <person name="Shinagawa H."/>
            <person name="Hattori M."/>
            <person name="Iida T."/>
        </authorList>
    </citation>
    <scope>NUCLEOTIDE SEQUENCE [LARGE SCALE GENOMIC DNA]</scope>
    <source>
        <strain>RIMD 2210633</strain>
    </source>
</reference>
<evidence type="ECO:0000250" key="1"/>
<evidence type="ECO:0000255" key="2">
    <source>
        <dbReference type="PROSITE-ProRule" id="PRU00648"/>
    </source>
</evidence>
<evidence type="ECO:0000305" key="3"/>
<proteinExistence type="inferred from homology"/>
<protein>
    <recommendedName>
        <fullName>Trimethylamine-N-oxide reductase</fullName>
        <shortName>TMAO reductase</shortName>
        <shortName>Trimethylamine oxidase</shortName>
        <ecNumber>1.7.2.3</ecNumber>
    </recommendedName>
</protein>
<comment type="function">
    <text evidence="1">Reduces trimethylamine-N-oxide (TMAO) into trimethylamine; an anaerobic reaction coupled to energy-yielding reactions.</text>
</comment>
<comment type="catalytic activity">
    <reaction>
        <text>trimethylamine + 2 Fe(III)-[cytochrome c] + H2O = trimethylamine N-oxide + 2 Fe(II)-[cytochrome c] + 3 H(+)</text>
        <dbReference type="Rhea" id="RHEA:24236"/>
        <dbReference type="Rhea" id="RHEA-COMP:10350"/>
        <dbReference type="Rhea" id="RHEA-COMP:14399"/>
        <dbReference type="ChEBI" id="CHEBI:15377"/>
        <dbReference type="ChEBI" id="CHEBI:15378"/>
        <dbReference type="ChEBI" id="CHEBI:15724"/>
        <dbReference type="ChEBI" id="CHEBI:29033"/>
        <dbReference type="ChEBI" id="CHEBI:29034"/>
        <dbReference type="ChEBI" id="CHEBI:58389"/>
        <dbReference type="EC" id="1.7.2.3"/>
    </reaction>
</comment>
<comment type="cofactor">
    <cofactor evidence="1">
        <name>Mo-bis(molybdopterin guanine dinucleotide)</name>
        <dbReference type="ChEBI" id="CHEBI:60539"/>
    </cofactor>
    <text evidence="1">Binds 1 molybdenum-bis(molybdopterin guanine dinucleotide) (Mo-bis-MGD) cofactor per subunit.</text>
</comment>
<comment type="subcellular location">
    <subcellularLocation>
        <location evidence="1">Periplasm</location>
    </subcellularLocation>
</comment>
<comment type="PTM">
    <text>Predicted to be exported by the Tat system. The position of the signal peptide cleavage has not been experimentally proven.</text>
</comment>
<comment type="similarity">
    <text evidence="3">Belongs to the prokaryotic molybdopterin-containing oxidoreductase family.</text>
</comment>
<organism>
    <name type="scientific">Vibrio parahaemolyticus serotype O3:K6 (strain RIMD 2210633)</name>
    <dbReference type="NCBI Taxonomy" id="223926"/>
    <lineage>
        <taxon>Bacteria</taxon>
        <taxon>Pseudomonadati</taxon>
        <taxon>Pseudomonadota</taxon>
        <taxon>Gammaproteobacteria</taxon>
        <taxon>Vibrionales</taxon>
        <taxon>Vibrionaceae</taxon>
        <taxon>Vibrio</taxon>
    </lineage>
</organism>